<organism>
    <name type="scientific">Salmonella typhimurium (strain LT2 / SGSC1412 / ATCC 700720)</name>
    <dbReference type="NCBI Taxonomy" id="99287"/>
    <lineage>
        <taxon>Bacteria</taxon>
        <taxon>Pseudomonadati</taxon>
        <taxon>Pseudomonadota</taxon>
        <taxon>Gammaproteobacteria</taxon>
        <taxon>Enterobacterales</taxon>
        <taxon>Enterobacteriaceae</taxon>
        <taxon>Salmonella</taxon>
    </lineage>
</organism>
<accession>Q8ZPJ2</accession>
<gene>
    <name evidence="1" type="primary">ynfA</name>
    <name type="ordered locus">STM1504</name>
</gene>
<feature type="chain" id="PRO_0000162344" description="UPF0060 membrane protein YnfA">
    <location>
        <begin position="1"/>
        <end position="108"/>
    </location>
</feature>
<feature type="topological domain" description="Periplasmic" evidence="1">
    <location>
        <begin position="1"/>
        <end position="5"/>
    </location>
</feature>
<feature type="transmembrane region" description="Helical" evidence="1">
    <location>
        <begin position="6"/>
        <end position="26"/>
    </location>
</feature>
<feature type="topological domain" description="Cytoplasmic" evidence="1">
    <location>
        <begin position="27"/>
        <end position="30"/>
    </location>
</feature>
<feature type="transmembrane region" description="Helical" evidence="1">
    <location>
        <begin position="31"/>
        <end position="51"/>
    </location>
</feature>
<feature type="topological domain" description="Periplasmic" evidence="1">
    <location>
        <begin position="52"/>
        <end position="60"/>
    </location>
</feature>
<feature type="transmembrane region" description="Helical" evidence="1">
    <location>
        <begin position="61"/>
        <end position="81"/>
    </location>
</feature>
<feature type="topological domain" description="Cytoplasmic" evidence="1">
    <location>
        <begin position="82"/>
        <end position="84"/>
    </location>
</feature>
<feature type="transmembrane region" description="Helical" evidence="1">
    <location>
        <begin position="85"/>
        <end position="105"/>
    </location>
</feature>
<feature type="topological domain" description="Periplasmic" evidence="1">
    <location>
        <begin position="106"/>
        <end position="108"/>
    </location>
</feature>
<reference key="1">
    <citation type="journal article" date="2001" name="Nature">
        <title>Complete genome sequence of Salmonella enterica serovar Typhimurium LT2.</title>
        <authorList>
            <person name="McClelland M."/>
            <person name="Sanderson K.E."/>
            <person name="Spieth J."/>
            <person name="Clifton S.W."/>
            <person name="Latreille P."/>
            <person name="Courtney L."/>
            <person name="Porwollik S."/>
            <person name="Ali J."/>
            <person name="Dante M."/>
            <person name="Du F."/>
            <person name="Hou S."/>
            <person name="Layman D."/>
            <person name="Leonard S."/>
            <person name="Nguyen C."/>
            <person name="Scott K."/>
            <person name="Holmes A."/>
            <person name="Grewal N."/>
            <person name="Mulvaney E."/>
            <person name="Ryan E."/>
            <person name="Sun H."/>
            <person name="Florea L."/>
            <person name="Miller W."/>
            <person name="Stoneking T."/>
            <person name="Nhan M."/>
            <person name="Waterston R."/>
            <person name="Wilson R.K."/>
        </authorList>
    </citation>
    <scope>NUCLEOTIDE SEQUENCE [LARGE SCALE GENOMIC DNA]</scope>
    <source>
        <strain>LT2 / SGSC1412 / ATCC 700720</strain>
    </source>
</reference>
<sequence length="108" mass="11948">MLKTTLLFFVTALCEIIGCFLPWLWLKRGASVWWLLPAAASLALFVWLLTLHPAASGRVYAAYGGVYVCTALLWLRVVDGVRLTVYDWCGALIALCGMLIIVVGWGRT</sequence>
<evidence type="ECO:0000255" key="1">
    <source>
        <dbReference type="HAMAP-Rule" id="MF_00010"/>
    </source>
</evidence>
<name>YNFA_SALTY</name>
<proteinExistence type="inferred from homology"/>
<comment type="subcellular location">
    <subcellularLocation>
        <location evidence="1">Cell inner membrane</location>
        <topology evidence="1">Multi-pass membrane protein</topology>
    </subcellularLocation>
</comment>
<comment type="similarity">
    <text evidence="1">Belongs to the UPF0060 family.</text>
</comment>
<dbReference type="EMBL" id="AE006468">
    <property type="protein sequence ID" value="AAL20423.1"/>
    <property type="molecule type" value="Genomic_DNA"/>
</dbReference>
<dbReference type="RefSeq" id="NP_460464.1">
    <property type="nucleotide sequence ID" value="NC_003197.2"/>
</dbReference>
<dbReference type="RefSeq" id="WP_000921389.1">
    <property type="nucleotide sequence ID" value="NC_003197.2"/>
</dbReference>
<dbReference type="SMR" id="Q8ZPJ2"/>
<dbReference type="STRING" id="99287.STM1504"/>
<dbReference type="PaxDb" id="99287-STM1504"/>
<dbReference type="GeneID" id="1253022"/>
<dbReference type="KEGG" id="stm:STM1504"/>
<dbReference type="PATRIC" id="fig|99287.12.peg.1589"/>
<dbReference type="HOGENOM" id="CLU_117653_2_1_6"/>
<dbReference type="OMA" id="DLYDWIG"/>
<dbReference type="PhylomeDB" id="Q8ZPJ2"/>
<dbReference type="BioCyc" id="SENT99287:STM1504-MONOMER"/>
<dbReference type="Proteomes" id="UP000001014">
    <property type="component" value="Chromosome"/>
</dbReference>
<dbReference type="GO" id="GO:0005886">
    <property type="term" value="C:plasma membrane"/>
    <property type="evidence" value="ECO:0000318"/>
    <property type="project" value="GO_Central"/>
</dbReference>
<dbReference type="HAMAP" id="MF_00010">
    <property type="entry name" value="UPF0060"/>
    <property type="match status" value="1"/>
</dbReference>
<dbReference type="InterPro" id="IPR003844">
    <property type="entry name" value="UPF0060"/>
</dbReference>
<dbReference type="NCBIfam" id="NF002586">
    <property type="entry name" value="PRK02237.1"/>
    <property type="match status" value="1"/>
</dbReference>
<dbReference type="PANTHER" id="PTHR36116">
    <property type="entry name" value="UPF0060 MEMBRANE PROTEIN YNFA"/>
    <property type="match status" value="1"/>
</dbReference>
<dbReference type="PANTHER" id="PTHR36116:SF1">
    <property type="entry name" value="UPF0060 MEMBRANE PROTEIN YNFA"/>
    <property type="match status" value="1"/>
</dbReference>
<dbReference type="Pfam" id="PF02694">
    <property type="entry name" value="UPF0060"/>
    <property type="match status" value="1"/>
</dbReference>
<dbReference type="SUPFAM" id="SSF103481">
    <property type="entry name" value="Multidrug resistance efflux transporter EmrE"/>
    <property type="match status" value="1"/>
</dbReference>
<protein>
    <recommendedName>
        <fullName evidence="1">UPF0060 membrane protein YnfA</fullName>
    </recommendedName>
</protein>
<keyword id="KW-0997">Cell inner membrane</keyword>
<keyword id="KW-1003">Cell membrane</keyword>
<keyword id="KW-0472">Membrane</keyword>
<keyword id="KW-1185">Reference proteome</keyword>
<keyword id="KW-0812">Transmembrane</keyword>
<keyword id="KW-1133">Transmembrane helix</keyword>